<accession>Q087H5</accession>
<gene>
    <name type="ordered locus">Sfri_0732</name>
</gene>
<feature type="chain" id="PRO_0000261973" description="Nucleotide-binding protein Sfri_0732">
    <location>
        <begin position="1"/>
        <end position="161"/>
    </location>
</feature>
<reference key="1">
    <citation type="submission" date="2006-08" db="EMBL/GenBank/DDBJ databases">
        <title>Complete sequence of Shewanella frigidimarina NCIMB 400.</title>
        <authorList>
            <consortium name="US DOE Joint Genome Institute"/>
            <person name="Copeland A."/>
            <person name="Lucas S."/>
            <person name="Lapidus A."/>
            <person name="Barry K."/>
            <person name="Detter J.C."/>
            <person name="Glavina del Rio T."/>
            <person name="Hammon N."/>
            <person name="Israni S."/>
            <person name="Dalin E."/>
            <person name="Tice H."/>
            <person name="Pitluck S."/>
            <person name="Fredrickson J.K."/>
            <person name="Kolker E."/>
            <person name="McCuel L.A."/>
            <person name="DiChristina T."/>
            <person name="Nealson K.H."/>
            <person name="Newman D."/>
            <person name="Tiedje J.M."/>
            <person name="Zhou J."/>
            <person name="Romine M.F."/>
            <person name="Culley D.E."/>
            <person name="Serres M."/>
            <person name="Chertkov O."/>
            <person name="Brettin T."/>
            <person name="Bruce D."/>
            <person name="Han C."/>
            <person name="Tapia R."/>
            <person name="Gilna P."/>
            <person name="Schmutz J."/>
            <person name="Larimer F."/>
            <person name="Land M."/>
            <person name="Hauser L."/>
            <person name="Kyrpides N."/>
            <person name="Mikhailova N."/>
            <person name="Richardson P."/>
        </authorList>
    </citation>
    <scope>NUCLEOTIDE SEQUENCE [LARGE SCALE GENOMIC DNA]</scope>
    <source>
        <strain>NCIMB 400</strain>
    </source>
</reference>
<keyword id="KW-0547">Nucleotide-binding</keyword>
<keyword id="KW-1185">Reference proteome</keyword>
<comment type="function">
    <text evidence="1">Nucleotide-binding protein.</text>
</comment>
<comment type="similarity">
    <text evidence="1">Belongs to the YajQ family.</text>
</comment>
<evidence type="ECO:0000255" key="1">
    <source>
        <dbReference type="HAMAP-Rule" id="MF_00632"/>
    </source>
</evidence>
<protein>
    <recommendedName>
        <fullName evidence="1">Nucleotide-binding protein Sfri_0732</fullName>
    </recommendedName>
</protein>
<name>Y732_SHEFN</name>
<sequence length="161" mass="18251">MPSMDIVSEVDEEELRNAVENSRREVAGRFDLRGKEIEIDLKDNVVTLKSEDDFICKQLVDILRIQLSKRNVDPSSMEVDEKAVHSGKTFSLKVNFKQGIDSLVAKKLVKAIKDSKLKVQAAIQGDSVRITGKKRDDLQAVMRLAKESELGQPFQFDNFRD</sequence>
<dbReference type="EMBL" id="CP000447">
    <property type="protein sequence ID" value="ABI70590.1"/>
    <property type="molecule type" value="Genomic_DNA"/>
</dbReference>
<dbReference type="RefSeq" id="WP_011636215.1">
    <property type="nucleotide sequence ID" value="NC_008345.1"/>
</dbReference>
<dbReference type="SMR" id="Q087H5"/>
<dbReference type="STRING" id="318167.Sfri_0732"/>
<dbReference type="KEGG" id="sfr:Sfri_0732"/>
<dbReference type="eggNOG" id="COG1666">
    <property type="taxonomic scope" value="Bacteria"/>
</dbReference>
<dbReference type="HOGENOM" id="CLU_099839_1_0_6"/>
<dbReference type="OrthoDB" id="9801447at2"/>
<dbReference type="Proteomes" id="UP000000684">
    <property type="component" value="Chromosome"/>
</dbReference>
<dbReference type="GO" id="GO:0005829">
    <property type="term" value="C:cytosol"/>
    <property type="evidence" value="ECO:0007669"/>
    <property type="project" value="TreeGrafter"/>
</dbReference>
<dbReference type="GO" id="GO:0000166">
    <property type="term" value="F:nucleotide binding"/>
    <property type="evidence" value="ECO:0007669"/>
    <property type="project" value="TreeGrafter"/>
</dbReference>
<dbReference type="CDD" id="cd11740">
    <property type="entry name" value="YajQ_like"/>
    <property type="match status" value="1"/>
</dbReference>
<dbReference type="FunFam" id="3.30.70.860:FF:000001">
    <property type="entry name" value="UPF0234 protein YajQ"/>
    <property type="match status" value="1"/>
</dbReference>
<dbReference type="Gene3D" id="3.30.70.860">
    <property type="match status" value="1"/>
</dbReference>
<dbReference type="Gene3D" id="3.30.70.990">
    <property type="entry name" value="YajQ-like, domain 2"/>
    <property type="match status" value="1"/>
</dbReference>
<dbReference type="HAMAP" id="MF_00632">
    <property type="entry name" value="YajQ"/>
    <property type="match status" value="1"/>
</dbReference>
<dbReference type="InterPro" id="IPR007551">
    <property type="entry name" value="DUF520"/>
</dbReference>
<dbReference type="InterPro" id="IPR035571">
    <property type="entry name" value="UPF0234-like_C"/>
</dbReference>
<dbReference type="InterPro" id="IPR035570">
    <property type="entry name" value="UPF0234_N"/>
</dbReference>
<dbReference type="InterPro" id="IPR036183">
    <property type="entry name" value="YajQ-like_sf"/>
</dbReference>
<dbReference type="NCBIfam" id="NF003819">
    <property type="entry name" value="PRK05412.1"/>
    <property type="match status" value="1"/>
</dbReference>
<dbReference type="PANTHER" id="PTHR30476">
    <property type="entry name" value="UPF0234 PROTEIN YAJQ"/>
    <property type="match status" value="1"/>
</dbReference>
<dbReference type="PANTHER" id="PTHR30476:SF0">
    <property type="entry name" value="UPF0234 PROTEIN YAJQ"/>
    <property type="match status" value="1"/>
</dbReference>
<dbReference type="Pfam" id="PF04461">
    <property type="entry name" value="DUF520"/>
    <property type="match status" value="1"/>
</dbReference>
<dbReference type="SUPFAM" id="SSF89963">
    <property type="entry name" value="YajQ-like"/>
    <property type="match status" value="2"/>
</dbReference>
<proteinExistence type="inferred from homology"/>
<organism>
    <name type="scientific">Shewanella frigidimarina (strain NCIMB 400)</name>
    <dbReference type="NCBI Taxonomy" id="318167"/>
    <lineage>
        <taxon>Bacteria</taxon>
        <taxon>Pseudomonadati</taxon>
        <taxon>Pseudomonadota</taxon>
        <taxon>Gammaproteobacteria</taxon>
        <taxon>Alteromonadales</taxon>
        <taxon>Shewanellaceae</taxon>
        <taxon>Shewanella</taxon>
    </lineage>
</organism>